<reference key="1">
    <citation type="book" date="2006" name="Gram positive pathogens, 2nd edition">
        <title>The Staphylococcus aureus NCTC 8325 genome.</title>
        <editorList>
            <person name="Fischetti V."/>
            <person name="Novick R."/>
            <person name="Ferretti J."/>
            <person name="Portnoy D."/>
            <person name="Rood J."/>
        </editorList>
        <authorList>
            <person name="Gillaspy A.F."/>
            <person name="Worrell V."/>
            <person name="Orvis J."/>
            <person name="Roe B.A."/>
            <person name="Dyer D.W."/>
            <person name="Iandolo J.J."/>
        </authorList>
    </citation>
    <scope>NUCLEOTIDE SEQUENCE [LARGE SCALE GENOMIC DNA]</scope>
    <source>
        <strain>NCTC 8325 / PS 47</strain>
    </source>
</reference>
<reference key="2">
    <citation type="journal article" date="2005" name="Infect. Immun.">
        <title>Staphylococcus aureus virulence factors identified by using a high-throughput Caenorhabditis elegans-killing model.</title>
        <authorList>
            <person name="Begun J."/>
            <person name="Sifri C.D."/>
            <person name="Goldman S."/>
            <person name="Calderwood S.B."/>
            <person name="Ausubel F.M."/>
        </authorList>
    </citation>
    <scope>VIRULENCE STUDIES</scope>
</reference>
<accession>Q2FZX0</accession>
<gene>
    <name type="primary">nagD</name>
    <name type="ordered locus">SAOUHSC_00865</name>
</gene>
<keyword id="KW-0378">Hydrolase</keyword>
<keyword id="KW-0460">Magnesium</keyword>
<keyword id="KW-0479">Metal-binding</keyword>
<keyword id="KW-1185">Reference proteome</keyword>
<proteinExistence type="inferred from homology"/>
<evidence type="ECO:0000250" key="1">
    <source>
        <dbReference type="UniProtKB" id="Q99VE8"/>
    </source>
</evidence>
<evidence type="ECO:0000305" key="2"/>
<organism>
    <name type="scientific">Staphylococcus aureus (strain NCTC 8325 / PS 47)</name>
    <dbReference type="NCBI Taxonomy" id="93061"/>
    <lineage>
        <taxon>Bacteria</taxon>
        <taxon>Bacillati</taxon>
        <taxon>Bacillota</taxon>
        <taxon>Bacilli</taxon>
        <taxon>Bacillales</taxon>
        <taxon>Staphylococcaceae</taxon>
        <taxon>Staphylococcus</taxon>
    </lineage>
</organism>
<protein>
    <recommendedName>
        <fullName evidence="1">Acid sugar phosphatase</fullName>
        <ecNumber evidence="1">3.1.3.-</ecNumber>
    </recommendedName>
</protein>
<name>NAGD_STAA8</name>
<comment type="function">
    <text evidence="1">Catalyzes the dephosphorylation of 2-6 carbon acid sugars in vitro.</text>
</comment>
<comment type="cofactor">
    <cofactor evidence="1">
        <name>Mg(2+)</name>
        <dbReference type="ChEBI" id="CHEBI:18420"/>
    </cofactor>
</comment>
<comment type="miscellaneous">
    <text>In murine kidney infection models nagD mutant was attenuated in virulence.</text>
</comment>
<comment type="similarity">
    <text evidence="2">Belongs to the HAD-like hydrolase superfamily. NagD family.</text>
</comment>
<feature type="chain" id="PRO_0000271223" description="Acid sugar phosphatase">
    <location>
        <begin position="1"/>
        <end position="259"/>
    </location>
</feature>
<dbReference type="EC" id="3.1.3.-" evidence="1"/>
<dbReference type="EMBL" id="CP000253">
    <property type="protein sequence ID" value="ABD29990.1"/>
    <property type="molecule type" value="Genomic_DNA"/>
</dbReference>
<dbReference type="RefSeq" id="WP_000816184.1">
    <property type="nucleotide sequence ID" value="NZ_LS483365.1"/>
</dbReference>
<dbReference type="RefSeq" id="YP_499418.1">
    <property type="nucleotide sequence ID" value="NC_007795.1"/>
</dbReference>
<dbReference type="SMR" id="Q2FZX0"/>
<dbReference type="STRING" id="93061.SAOUHSC_00865"/>
<dbReference type="PaxDb" id="1280-SAXN108_0924"/>
<dbReference type="GeneID" id="3918995"/>
<dbReference type="KEGG" id="sao:SAOUHSC_00865"/>
<dbReference type="PATRIC" id="fig|93061.5.peg.786"/>
<dbReference type="eggNOG" id="COG0647">
    <property type="taxonomic scope" value="Bacteria"/>
</dbReference>
<dbReference type="HOGENOM" id="CLU_043473_1_1_9"/>
<dbReference type="OrthoDB" id="9810449at2"/>
<dbReference type="Proteomes" id="UP000008816">
    <property type="component" value="Chromosome"/>
</dbReference>
<dbReference type="GO" id="GO:0005737">
    <property type="term" value="C:cytoplasm"/>
    <property type="evidence" value="ECO:0000318"/>
    <property type="project" value="GO_Central"/>
</dbReference>
<dbReference type="GO" id="GO:0046872">
    <property type="term" value="F:metal ion binding"/>
    <property type="evidence" value="ECO:0007669"/>
    <property type="project" value="UniProtKB-KW"/>
</dbReference>
<dbReference type="GO" id="GO:0016791">
    <property type="term" value="F:phosphatase activity"/>
    <property type="evidence" value="ECO:0000318"/>
    <property type="project" value="GO_Central"/>
</dbReference>
<dbReference type="CDD" id="cd07530">
    <property type="entry name" value="HAD_Pase_UmpH-like"/>
    <property type="match status" value="1"/>
</dbReference>
<dbReference type="FunFam" id="3.40.50.1000:FF:000053">
    <property type="entry name" value="TIGR01457 family HAD hydrolase"/>
    <property type="match status" value="1"/>
</dbReference>
<dbReference type="Gene3D" id="3.40.50.1000">
    <property type="entry name" value="HAD superfamily/HAD-like"/>
    <property type="match status" value="2"/>
</dbReference>
<dbReference type="InterPro" id="IPR036412">
    <property type="entry name" value="HAD-like_sf"/>
</dbReference>
<dbReference type="InterPro" id="IPR006357">
    <property type="entry name" value="HAD-SF_hydro_IIA"/>
</dbReference>
<dbReference type="InterPro" id="IPR006354">
    <property type="entry name" value="HAD-SF_hydro_IIA_hyp1"/>
</dbReference>
<dbReference type="InterPro" id="IPR023214">
    <property type="entry name" value="HAD_sf"/>
</dbReference>
<dbReference type="NCBIfam" id="TIGR01460">
    <property type="entry name" value="HAD-SF-IIA"/>
    <property type="match status" value="1"/>
</dbReference>
<dbReference type="NCBIfam" id="TIGR01457">
    <property type="entry name" value="HAD-SF-IIA-hyp2"/>
    <property type="match status" value="1"/>
</dbReference>
<dbReference type="PANTHER" id="PTHR19288">
    <property type="entry name" value="4-NITROPHENYLPHOSPHATASE-RELATED"/>
    <property type="match status" value="1"/>
</dbReference>
<dbReference type="PANTHER" id="PTHR19288:SF46">
    <property type="entry name" value="HALOACID DEHALOGENASE-LIKE HYDROLASE DOMAIN-CONTAINING PROTEIN 2"/>
    <property type="match status" value="1"/>
</dbReference>
<dbReference type="Pfam" id="PF13344">
    <property type="entry name" value="Hydrolase_6"/>
    <property type="match status" value="1"/>
</dbReference>
<dbReference type="Pfam" id="PF13242">
    <property type="entry name" value="Hydrolase_like"/>
    <property type="match status" value="1"/>
</dbReference>
<dbReference type="PIRSF" id="PIRSF000915">
    <property type="entry name" value="PGP-type_phosphatase"/>
    <property type="match status" value="1"/>
</dbReference>
<dbReference type="SFLD" id="SFLDG01139">
    <property type="entry name" value="C2.A:_Pyridoxal_Phosphate_Phos"/>
    <property type="match status" value="1"/>
</dbReference>
<dbReference type="SFLD" id="SFLDS00003">
    <property type="entry name" value="Haloacid_Dehalogenase"/>
    <property type="match status" value="1"/>
</dbReference>
<dbReference type="SUPFAM" id="SSF56784">
    <property type="entry name" value="HAD-like"/>
    <property type="match status" value="1"/>
</dbReference>
<sequence length="259" mass="27946">MKQYKAYLIDLDGTMYMGTDEIDGAKQFIDYLNVKGIPHLYVTNNSTKTPEQVTEKLREMHIDAKPEEVVTSALATADYISEQSPGASVYMLGGSGLNTALTEAGLVIKNDEHVDYVVIGLDEQVTYEKLAIATLGVRNGATFISTNPDVSIPKERGLLPGNGAITSVVSVSTGVSPQFIGKPEPIIMVKALEILGLDKSEVAMVGDLYDTDIMSGINVGMDTIHVQTGVSTLEDVQNKNVPPTYSFKDLNEAIAELEK</sequence>